<dbReference type="EMBL" id="AF137379">
    <property type="protein sequence ID" value="AAD54779.1"/>
    <property type="molecule type" value="Genomic_DNA"/>
</dbReference>
<dbReference type="RefSeq" id="NP_050808.1">
    <property type="nucleotide sequence ID" value="NC_000927.1"/>
</dbReference>
<dbReference type="SMR" id="Q9TL37"/>
<dbReference type="GeneID" id="802002"/>
<dbReference type="GO" id="GO:0009535">
    <property type="term" value="C:chloroplast thylakoid membrane"/>
    <property type="evidence" value="ECO:0007669"/>
    <property type="project" value="UniProtKB-SubCell"/>
</dbReference>
<dbReference type="GO" id="GO:0009523">
    <property type="term" value="C:photosystem II"/>
    <property type="evidence" value="ECO:0007669"/>
    <property type="project" value="UniProtKB-KW"/>
</dbReference>
<dbReference type="GO" id="GO:0019684">
    <property type="term" value="P:photosynthesis, light reaction"/>
    <property type="evidence" value="ECO:0007669"/>
    <property type="project" value="InterPro"/>
</dbReference>
<dbReference type="HAMAP" id="MF_00438">
    <property type="entry name" value="PSII_PsbM"/>
    <property type="match status" value="1"/>
</dbReference>
<dbReference type="InterPro" id="IPR007826">
    <property type="entry name" value="PSII_PsbM"/>
</dbReference>
<dbReference type="InterPro" id="IPR037269">
    <property type="entry name" value="PSII_PsbM_sf"/>
</dbReference>
<dbReference type="NCBIfam" id="TIGR03038">
    <property type="entry name" value="PS_II_psbM"/>
    <property type="match status" value="1"/>
</dbReference>
<dbReference type="PANTHER" id="PTHR35774">
    <property type="entry name" value="PHOTOSYSTEM II REACTION CENTER PROTEIN M"/>
    <property type="match status" value="1"/>
</dbReference>
<dbReference type="PANTHER" id="PTHR35774:SF1">
    <property type="entry name" value="PHOTOSYSTEM II REACTION CENTER PROTEIN M"/>
    <property type="match status" value="1"/>
</dbReference>
<dbReference type="Pfam" id="PF05151">
    <property type="entry name" value="PsbM"/>
    <property type="match status" value="1"/>
</dbReference>
<dbReference type="SUPFAM" id="SSF161033">
    <property type="entry name" value="Photosystem II reaction center protein M, PsbM"/>
    <property type="match status" value="1"/>
</dbReference>
<organism>
    <name type="scientific">Nephroselmis olivacea</name>
    <name type="common">Green alga</name>
    <dbReference type="NCBI Taxonomy" id="31312"/>
    <lineage>
        <taxon>Eukaryota</taxon>
        <taxon>Viridiplantae</taxon>
        <taxon>Chlorophyta</taxon>
        <taxon>Nephroselmidophyceae</taxon>
        <taxon>Nephroselmidales</taxon>
        <taxon>Nephroselmidaceae</taxon>
        <taxon>Nephroselmis</taxon>
    </lineage>
</organism>
<feature type="chain" id="PRO_0000217562" description="Photosystem II reaction center protein M">
    <location>
        <begin position="1"/>
        <end position="34"/>
    </location>
</feature>
<feature type="transmembrane region" description="Helical" evidence="1">
    <location>
        <begin position="5"/>
        <end position="25"/>
    </location>
</feature>
<geneLocation type="chloroplast"/>
<protein>
    <recommendedName>
        <fullName evidence="1">Photosystem II reaction center protein M</fullName>
        <shortName evidence="1">PSII-M</shortName>
    </recommendedName>
</protein>
<name>PSBM_NEPOL</name>
<keyword id="KW-0150">Chloroplast</keyword>
<keyword id="KW-0472">Membrane</keyword>
<keyword id="KW-0602">Photosynthesis</keyword>
<keyword id="KW-0604">Photosystem II</keyword>
<keyword id="KW-0934">Plastid</keyword>
<keyword id="KW-0674">Reaction center</keyword>
<keyword id="KW-0793">Thylakoid</keyword>
<keyword id="KW-0812">Transmembrane</keyword>
<keyword id="KW-1133">Transmembrane helix</keyword>
<accession>Q9TL37</accession>
<comment type="function">
    <text evidence="1">One of the components of the core complex of photosystem II (PSII). PSII is a light-driven water:plastoquinone oxidoreductase that uses light energy to abstract electrons from H(2)O, generating O(2) and a proton gradient subsequently used for ATP formation. It consists of a core antenna complex that captures photons, and an electron transfer chain that converts photonic excitation into a charge separation. This subunit is found at the monomer-monomer interface.</text>
</comment>
<comment type="subunit">
    <text evidence="1">PSII is composed of 1 copy each of membrane proteins PsbA, PsbB, PsbC, PsbD, PsbE, PsbF, PsbH, PsbI, PsbJ, PsbK, PsbL, PsbM, PsbT, PsbX, PsbY, PsbZ, Psb30/Ycf12, at least 3 peripheral proteins of the oxygen-evolving complex and a large number of cofactors. It forms dimeric complexes.</text>
</comment>
<comment type="subcellular location">
    <subcellularLocation>
        <location evidence="1">Plastid</location>
        <location evidence="1">Chloroplast thylakoid membrane</location>
        <topology evidence="1">Single-pass membrane protein</topology>
    </subcellularLocation>
</comment>
<comment type="similarity">
    <text evidence="1">Belongs to the PsbM family.</text>
</comment>
<sequence>MEVNILGLIATALFIIIPTSFLLILYVKTASQQN</sequence>
<reference key="1">
    <citation type="journal article" date="1999" name="Proc. Natl. Acad. Sci. U.S.A.">
        <title>The complete chloroplast DNA sequence of the green alga Nephroselmis olivacea: insights into the architecture of ancestral chloroplast genomes.</title>
        <authorList>
            <person name="Turmel M."/>
            <person name="Otis C."/>
            <person name="Lemieux C."/>
        </authorList>
    </citation>
    <scope>NUCLEOTIDE SEQUENCE [LARGE SCALE GENOMIC DNA]</scope>
    <source>
        <strain>NIES-484 / S-N-5-8</strain>
    </source>
</reference>
<evidence type="ECO:0000255" key="1">
    <source>
        <dbReference type="HAMAP-Rule" id="MF_00438"/>
    </source>
</evidence>
<gene>
    <name evidence="1" type="primary">psbM</name>
</gene>
<proteinExistence type="inferred from homology"/>